<evidence type="ECO:0000255" key="1">
    <source>
        <dbReference type="HAMAP-Rule" id="MF_00020"/>
    </source>
</evidence>
<sequence length="395" mass="44253">MPKVLVMNAGSSSHKLSLFSDKIENAGSALWKAHIEWGKKNPSYTLKNGSQESNPIYLQTTSVKQGIQEVIEKLWIGDFAVIKEVHEIEWIGHRVVHGGSLFHQPVLINASVKKDISNLSSLAPLHNPINLEGIELLEKIFPSIPHFAVFDTAFHRTMREEIKTYPIPYEWKEKGIERYGFHGISHSYCAKQIKKWIKPQETPFKLINCHLGNGASLCAIRDGFSIDTTMGFTPMEGLMMGTRSGSIDPGILIYCLRNKNLSLEELDHLLNFESGLKGIGGTSDMREIHAFKNKQSQLALDMYIYRLKTGIGAMTASLGGIDALCFTGGIGENDSYLRKKTCEELAYLGIQLDLQKNQGGNQDKEISLHDSPVKVFVIHTQEEWMIAKSCLEYLT</sequence>
<proteinExistence type="inferred from homology"/>
<dbReference type="EC" id="2.7.2.1" evidence="1"/>
<dbReference type="EMBL" id="BX908798">
    <property type="protein sequence ID" value="CAF24086.1"/>
    <property type="molecule type" value="Genomic_DNA"/>
</dbReference>
<dbReference type="RefSeq" id="WP_011175911.1">
    <property type="nucleotide sequence ID" value="NC_005861.2"/>
</dbReference>
<dbReference type="SMR" id="Q6MBG3"/>
<dbReference type="STRING" id="264201.pc1362"/>
<dbReference type="KEGG" id="pcu:PC_RS06540"/>
<dbReference type="eggNOG" id="COG0282">
    <property type="taxonomic scope" value="Bacteria"/>
</dbReference>
<dbReference type="HOGENOM" id="CLU_020352_0_1_0"/>
<dbReference type="OrthoDB" id="9802453at2"/>
<dbReference type="UniPathway" id="UPA00340">
    <property type="reaction ID" value="UER00458"/>
</dbReference>
<dbReference type="Proteomes" id="UP000000529">
    <property type="component" value="Chromosome"/>
</dbReference>
<dbReference type="GO" id="GO:0005737">
    <property type="term" value="C:cytoplasm"/>
    <property type="evidence" value="ECO:0007669"/>
    <property type="project" value="UniProtKB-SubCell"/>
</dbReference>
<dbReference type="GO" id="GO:0008776">
    <property type="term" value="F:acetate kinase activity"/>
    <property type="evidence" value="ECO:0007669"/>
    <property type="project" value="UniProtKB-UniRule"/>
</dbReference>
<dbReference type="GO" id="GO:0005524">
    <property type="term" value="F:ATP binding"/>
    <property type="evidence" value="ECO:0007669"/>
    <property type="project" value="UniProtKB-KW"/>
</dbReference>
<dbReference type="GO" id="GO:0000287">
    <property type="term" value="F:magnesium ion binding"/>
    <property type="evidence" value="ECO:0007669"/>
    <property type="project" value="UniProtKB-UniRule"/>
</dbReference>
<dbReference type="GO" id="GO:0006083">
    <property type="term" value="P:acetate metabolic process"/>
    <property type="evidence" value="ECO:0007669"/>
    <property type="project" value="TreeGrafter"/>
</dbReference>
<dbReference type="GO" id="GO:0006085">
    <property type="term" value="P:acetyl-CoA biosynthetic process"/>
    <property type="evidence" value="ECO:0007669"/>
    <property type="project" value="UniProtKB-UniRule"/>
</dbReference>
<dbReference type="CDD" id="cd24010">
    <property type="entry name" value="ASKHA_NBD_AcK_PK"/>
    <property type="match status" value="1"/>
</dbReference>
<dbReference type="Gene3D" id="3.30.420.40">
    <property type="match status" value="2"/>
</dbReference>
<dbReference type="HAMAP" id="MF_00020">
    <property type="entry name" value="Acetate_kinase"/>
    <property type="match status" value="1"/>
</dbReference>
<dbReference type="InterPro" id="IPR004372">
    <property type="entry name" value="Ac/propionate_kinase"/>
</dbReference>
<dbReference type="InterPro" id="IPR000890">
    <property type="entry name" value="Aliphatic_acid_kin_short-chain"/>
</dbReference>
<dbReference type="InterPro" id="IPR023865">
    <property type="entry name" value="Aliphatic_acid_kinase_CS"/>
</dbReference>
<dbReference type="InterPro" id="IPR043129">
    <property type="entry name" value="ATPase_NBD"/>
</dbReference>
<dbReference type="NCBIfam" id="TIGR00016">
    <property type="entry name" value="ackA"/>
    <property type="match status" value="1"/>
</dbReference>
<dbReference type="PANTHER" id="PTHR21060">
    <property type="entry name" value="ACETATE KINASE"/>
    <property type="match status" value="1"/>
</dbReference>
<dbReference type="PANTHER" id="PTHR21060:SF15">
    <property type="entry name" value="ACETATE KINASE-RELATED"/>
    <property type="match status" value="1"/>
</dbReference>
<dbReference type="Pfam" id="PF00871">
    <property type="entry name" value="Acetate_kinase"/>
    <property type="match status" value="1"/>
</dbReference>
<dbReference type="PIRSF" id="PIRSF000722">
    <property type="entry name" value="Acetate_prop_kin"/>
    <property type="match status" value="1"/>
</dbReference>
<dbReference type="PRINTS" id="PR00471">
    <property type="entry name" value="ACETATEKNASE"/>
</dbReference>
<dbReference type="SUPFAM" id="SSF53067">
    <property type="entry name" value="Actin-like ATPase domain"/>
    <property type="match status" value="2"/>
</dbReference>
<dbReference type="PROSITE" id="PS01075">
    <property type="entry name" value="ACETATE_KINASE_1"/>
    <property type="match status" value="1"/>
</dbReference>
<dbReference type="PROSITE" id="PS01076">
    <property type="entry name" value="ACETATE_KINASE_2"/>
    <property type="match status" value="1"/>
</dbReference>
<protein>
    <recommendedName>
        <fullName evidence="1">Acetate kinase</fullName>
        <ecNumber evidence="1">2.7.2.1</ecNumber>
    </recommendedName>
    <alternativeName>
        <fullName evidence="1">Acetokinase</fullName>
    </alternativeName>
</protein>
<comment type="function">
    <text evidence="1">Catalyzes the formation of acetyl phosphate from acetate and ATP. Can also catalyze the reverse reaction.</text>
</comment>
<comment type="catalytic activity">
    <reaction evidence="1">
        <text>acetate + ATP = acetyl phosphate + ADP</text>
        <dbReference type="Rhea" id="RHEA:11352"/>
        <dbReference type="ChEBI" id="CHEBI:22191"/>
        <dbReference type="ChEBI" id="CHEBI:30089"/>
        <dbReference type="ChEBI" id="CHEBI:30616"/>
        <dbReference type="ChEBI" id="CHEBI:456216"/>
        <dbReference type="EC" id="2.7.2.1"/>
    </reaction>
</comment>
<comment type="cofactor">
    <cofactor evidence="1">
        <name>Mg(2+)</name>
        <dbReference type="ChEBI" id="CHEBI:18420"/>
    </cofactor>
    <cofactor evidence="1">
        <name>Mn(2+)</name>
        <dbReference type="ChEBI" id="CHEBI:29035"/>
    </cofactor>
    <text evidence="1">Mg(2+). Can also accept Mn(2+).</text>
</comment>
<comment type="pathway">
    <text evidence="1">Metabolic intermediate biosynthesis; acetyl-CoA biosynthesis; acetyl-CoA from acetate: step 1/2.</text>
</comment>
<comment type="subunit">
    <text evidence="1">Homodimer.</text>
</comment>
<comment type="subcellular location">
    <subcellularLocation>
        <location evidence="1">Cytoplasm</location>
    </subcellularLocation>
</comment>
<comment type="similarity">
    <text evidence="1">Belongs to the acetokinase family.</text>
</comment>
<accession>Q6MBG3</accession>
<keyword id="KW-0067">ATP-binding</keyword>
<keyword id="KW-0963">Cytoplasm</keyword>
<keyword id="KW-0418">Kinase</keyword>
<keyword id="KW-0460">Magnesium</keyword>
<keyword id="KW-0479">Metal-binding</keyword>
<keyword id="KW-0547">Nucleotide-binding</keyword>
<keyword id="KW-1185">Reference proteome</keyword>
<keyword id="KW-0808">Transferase</keyword>
<feature type="chain" id="PRO_1000089988" description="Acetate kinase">
    <location>
        <begin position="1"/>
        <end position="395"/>
    </location>
</feature>
<feature type="active site" description="Proton donor/acceptor" evidence="1">
    <location>
        <position position="151"/>
    </location>
</feature>
<feature type="binding site" evidence="1">
    <location>
        <position position="8"/>
    </location>
    <ligand>
        <name>Mg(2+)</name>
        <dbReference type="ChEBI" id="CHEBI:18420"/>
    </ligand>
</feature>
<feature type="binding site" evidence="1">
    <location>
        <position position="15"/>
    </location>
    <ligand>
        <name>ATP</name>
        <dbReference type="ChEBI" id="CHEBI:30616"/>
    </ligand>
</feature>
<feature type="binding site" evidence="1">
    <location>
        <position position="94"/>
    </location>
    <ligand>
        <name>substrate</name>
    </ligand>
</feature>
<feature type="binding site" evidence="1">
    <location>
        <begin position="210"/>
        <end position="214"/>
    </location>
    <ligand>
        <name>ATP</name>
        <dbReference type="ChEBI" id="CHEBI:30616"/>
    </ligand>
</feature>
<feature type="binding site" evidence="1">
    <location>
        <begin position="284"/>
        <end position="286"/>
    </location>
    <ligand>
        <name>ATP</name>
        <dbReference type="ChEBI" id="CHEBI:30616"/>
    </ligand>
</feature>
<feature type="binding site" evidence="1">
    <location>
        <begin position="329"/>
        <end position="333"/>
    </location>
    <ligand>
        <name>ATP</name>
        <dbReference type="ChEBI" id="CHEBI:30616"/>
    </ligand>
</feature>
<feature type="binding site" evidence="1">
    <location>
        <position position="382"/>
    </location>
    <ligand>
        <name>Mg(2+)</name>
        <dbReference type="ChEBI" id="CHEBI:18420"/>
    </ligand>
</feature>
<feature type="site" description="Transition state stabilizer" evidence="1">
    <location>
        <position position="182"/>
    </location>
</feature>
<feature type="site" description="Transition state stabilizer" evidence="1">
    <location>
        <position position="243"/>
    </location>
</feature>
<gene>
    <name evidence="1" type="primary">ackA</name>
    <name type="ordered locus">pc1362</name>
</gene>
<organism>
    <name type="scientific">Protochlamydia amoebophila (strain UWE25)</name>
    <dbReference type="NCBI Taxonomy" id="264201"/>
    <lineage>
        <taxon>Bacteria</taxon>
        <taxon>Pseudomonadati</taxon>
        <taxon>Chlamydiota</taxon>
        <taxon>Chlamydiia</taxon>
        <taxon>Parachlamydiales</taxon>
        <taxon>Parachlamydiaceae</taxon>
        <taxon>Candidatus Protochlamydia</taxon>
    </lineage>
</organism>
<reference key="1">
    <citation type="journal article" date="2004" name="Science">
        <title>Illuminating the evolutionary history of chlamydiae.</title>
        <authorList>
            <person name="Horn M."/>
            <person name="Collingro A."/>
            <person name="Schmitz-Esser S."/>
            <person name="Beier C.L."/>
            <person name="Purkhold U."/>
            <person name="Fartmann B."/>
            <person name="Brandt P."/>
            <person name="Nyakatura G.J."/>
            <person name="Droege M."/>
            <person name="Frishman D."/>
            <person name="Rattei T."/>
            <person name="Mewes H.-W."/>
            <person name="Wagner M."/>
        </authorList>
    </citation>
    <scope>NUCLEOTIDE SEQUENCE [LARGE SCALE GENOMIC DNA]</scope>
    <source>
        <strain>UWE25</strain>
    </source>
</reference>
<name>ACKA_PARUW</name>